<gene>
    <name type="primary">fla</name>
</gene>
<proteinExistence type="evidence at protein level"/>
<name>FLA_CLOTY</name>
<accession>P80583</accession>
<dbReference type="EMBL" id="AJ242662">
    <property type="protein sequence ID" value="CAB44444.1"/>
    <property type="molecule type" value="Genomic_DNA"/>
</dbReference>
<dbReference type="SMR" id="P80583"/>
<dbReference type="STRING" id="1519.CTK_C21390"/>
<dbReference type="GO" id="GO:0009288">
    <property type="term" value="C:bacterial-type flagellum"/>
    <property type="evidence" value="ECO:0007669"/>
    <property type="project" value="UniProtKB-SubCell"/>
</dbReference>
<dbReference type="GO" id="GO:0005576">
    <property type="term" value="C:extracellular region"/>
    <property type="evidence" value="ECO:0007669"/>
    <property type="project" value="UniProtKB-SubCell"/>
</dbReference>
<dbReference type="GO" id="GO:0005198">
    <property type="term" value="F:structural molecule activity"/>
    <property type="evidence" value="ECO:0007669"/>
    <property type="project" value="InterPro"/>
</dbReference>
<dbReference type="Gene3D" id="3.30.70.2120">
    <property type="match status" value="1"/>
</dbReference>
<dbReference type="Gene3D" id="1.20.1330.10">
    <property type="entry name" value="f41 fragment of flagellin, N-terminal domain"/>
    <property type="match status" value="1"/>
</dbReference>
<dbReference type="Gene3D" id="6.10.10.10">
    <property type="entry name" value="Flagellar export chaperone, C-terminal domain"/>
    <property type="match status" value="1"/>
</dbReference>
<dbReference type="InterPro" id="IPR001492">
    <property type="entry name" value="Flagellin"/>
</dbReference>
<dbReference type="InterPro" id="IPR046358">
    <property type="entry name" value="Flagellin_C"/>
</dbReference>
<dbReference type="InterPro" id="IPR042187">
    <property type="entry name" value="Flagellin_C_sub2"/>
</dbReference>
<dbReference type="InterPro" id="IPR001029">
    <property type="entry name" value="Flagellin_N"/>
</dbReference>
<dbReference type="PANTHER" id="PTHR42792">
    <property type="entry name" value="FLAGELLIN"/>
    <property type="match status" value="1"/>
</dbReference>
<dbReference type="PANTHER" id="PTHR42792:SF2">
    <property type="entry name" value="FLAGELLIN"/>
    <property type="match status" value="1"/>
</dbReference>
<dbReference type="Pfam" id="PF00700">
    <property type="entry name" value="Flagellin_C"/>
    <property type="match status" value="1"/>
</dbReference>
<dbReference type="Pfam" id="PF00669">
    <property type="entry name" value="Flagellin_N"/>
    <property type="match status" value="1"/>
</dbReference>
<dbReference type="PRINTS" id="PR00207">
    <property type="entry name" value="FLAGELLIN"/>
</dbReference>
<dbReference type="SUPFAM" id="SSF64518">
    <property type="entry name" value="Phase 1 flagellin"/>
    <property type="match status" value="1"/>
</dbReference>
<organism>
    <name type="scientific">Clostridium tyrobutyricum</name>
    <dbReference type="NCBI Taxonomy" id="1519"/>
    <lineage>
        <taxon>Bacteria</taxon>
        <taxon>Bacillati</taxon>
        <taxon>Bacillota</taxon>
        <taxon>Clostridia</taxon>
        <taxon>Eubacteriales</taxon>
        <taxon>Clostridiaceae</taxon>
        <taxon>Clostridium</taxon>
    </lineage>
</organism>
<comment type="function">
    <text>Flagellin is the subunit protein which polymerizes to form the filaments of bacterial flagella.</text>
</comment>
<comment type="subcellular location">
    <subcellularLocation>
        <location>Secreted</location>
    </subcellularLocation>
    <subcellularLocation>
        <location>Bacterial flagellum</location>
    </subcellularLocation>
</comment>
<comment type="similarity">
    <text evidence="1">Belongs to the bacterial flagellin family.</text>
</comment>
<protein>
    <recommendedName>
        <fullName>Flagellin</fullName>
    </recommendedName>
</protein>
<evidence type="ECO:0000305" key="1"/>
<reference key="1">
    <citation type="journal article" date="1999" name="Microbiol. Immunol.">
        <title>Cloning and sequencing of the central region of the flagellin gene from the Gram-positive bacterium Clostridium tyrobutyricum ATCC 25755.</title>
        <authorList>
            <person name="Arnold F."/>
            <person name="Bedouet L."/>
            <person name="Batina P."/>
            <person name="Robreau G.Y.A."/>
        </authorList>
    </citation>
    <scope>NUCLEOTIDE SEQUENCE [GENOMIC DNA]</scope>
    <scope>PROTEIN SEQUENCE OF 108-120</scope>
    <source>
        <strain>ATCC 25755 / DSM 2637 / LMG 1285 / VPI 5392</strain>
    </source>
</reference>
<reference key="2">
    <citation type="journal article" date="1998" name="Microbiol. Immunol.">
        <title>Biochemical and immunological analyses of the flagellin of Clostridium tyrobutyricum ATCC 25755.</title>
        <authorList>
            <person name="Arnold F."/>
            <person name="Bedouet L."/>
            <person name="Batina P."/>
            <person name="Robreau G.Y.A."/>
            <person name="Talbot F."/>
            <person name="Lecher P."/>
            <person name="Malcoste R."/>
        </authorList>
    </citation>
    <scope>PROTEIN SEQUENCE OF 1-23</scope>
    <source>
        <strain>ATCC 25755 / DSM 2637 / LMG 1285 / VPI 5392</strain>
    </source>
</reference>
<sequence>MIINHNLMANNALRNMNVNSNNASKAMEKLSSGLRINRAGDDAAGLAISEKMRGQINGLNQASSNAQDSISLIQTAEGALNETHSILQRMRTLAVQSSNDTNTTTDRSAIQDEVNQLTDEIDRIANTTEFNTQKLLDGSKVGLVDAKDADASVQLNTSANISLASNFSTTSATGIADSFTVTITRTHGTAGATFASTDYDVALVGGTELIEHSSSSLTYDTKAINLVGMIKCFSIRTNDTIRKVSHVRTVKALSMQIGAIVTNMLIGINSMKATDIGVRNTSGKALDISTASKATGAITQINNAIETVSTQRSKLGAYQNRLEHTINNLGTSSENLTSAESRIRDVDMASEMSEYSKNNILSQTAQAMLAQANQQTQ</sequence>
<keyword id="KW-0975">Bacterial flagellum</keyword>
<keyword id="KW-0903">Direct protein sequencing</keyword>
<keyword id="KW-0964">Secreted</keyword>
<feature type="chain" id="PRO_0000182606" description="Flagellin">
    <location>
        <begin position="1"/>
        <end position="377" status="greater than"/>
    </location>
</feature>
<feature type="non-terminal residue">
    <location>
        <position position="377"/>
    </location>
</feature>